<accession>P37559</accession>
<gene>
    <name type="primary">yabQ</name>
    <name type="ordered locus">BSU00610</name>
</gene>
<protein>
    <recommendedName>
        <fullName>Spore protein YabQ</fullName>
    </recommendedName>
</protein>
<evidence type="ECO:0000255" key="1"/>
<evidence type="ECO:0000269" key="2">
    <source>
    </source>
</evidence>
<evidence type="ECO:0000269" key="3">
    <source>
    </source>
</evidence>
<evidence type="ECO:0000269" key="4">
    <source>
    </source>
</evidence>
<keyword id="KW-0472">Membrane</keyword>
<keyword id="KW-1185">Reference proteome</keyword>
<keyword id="KW-0749">Sporulation</keyword>
<keyword id="KW-0812">Transmembrane</keyword>
<keyword id="KW-1133">Transmembrane helix</keyword>
<reference key="1">
    <citation type="journal article" date="1994" name="DNA Res.">
        <title>Systematic sequencing of the 180 kilobase region of the Bacillus subtilis chromosome containing the replication origin.</title>
        <authorList>
            <person name="Ogasawara N."/>
            <person name="Nakai S."/>
            <person name="Yoshikawa H."/>
        </authorList>
    </citation>
    <scope>NUCLEOTIDE SEQUENCE [GENOMIC DNA]</scope>
    <source>
        <strain>168</strain>
    </source>
</reference>
<reference key="2">
    <citation type="journal article" date="1997" name="Nature">
        <title>The complete genome sequence of the Gram-positive bacterium Bacillus subtilis.</title>
        <authorList>
            <person name="Kunst F."/>
            <person name="Ogasawara N."/>
            <person name="Moszer I."/>
            <person name="Albertini A.M."/>
            <person name="Alloni G."/>
            <person name="Azevedo V."/>
            <person name="Bertero M.G."/>
            <person name="Bessieres P."/>
            <person name="Bolotin A."/>
            <person name="Borchert S."/>
            <person name="Borriss R."/>
            <person name="Boursier L."/>
            <person name="Brans A."/>
            <person name="Braun M."/>
            <person name="Brignell S.C."/>
            <person name="Bron S."/>
            <person name="Brouillet S."/>
            <person name="Bruschi C.V."/>
            <person name="Caldwell B."/>
            <person name="Capuano V."/>
            <person name="Carter N.M."/>
            <person name="Choi S.-K."/>
            <person name="Codani J.-J."/>
            <person name="Connerton I.F."/>
            <person name="Cummings N.J."/>
            <person name="Daniel R.A."/>
            <person name="Denizot F."/>
            <person name="Devine K.M."/>
            <person name="Duesterhoeft A."/>
            <person name="Ehrlich S.D."/>
            <person name="Emmerson P.T."/>
            <person name="Entian K.-D."/>
            <person name="Errington J."/>
            <person name="Fabret C."/>
            <person name="Ferrari E."/>
            <person name="Foulger D."/>
            <person name="Fritz C."/>
            <person name="Fujita M."/>
            <person name="Fujita Y."/>
            <person name="Fuma S."/>
            <person name="Galizzi A."/>
            <person name="Galleron N."/>
            <person name="Ghim S.-Y."/>
            <person name="Glaser P."/>
            <person name="Goffeau A."/>
            <person name="Golightly E.J."/>
            <person name="Grandi G."/>
            <person name="Guiseppi G."/>
            <person name="Guy B.J."/>
            <person name="Haga K."/>
            <person name="Haiech J."/>
            <person name="Harwood C.R."/>
            <person name="Henaut A."/>
            <person name="Hilbert H."/>
            <person name="Holsappel S."/>
            <person name="Hosono S."/>
            <person name="Hullo M.-F."/>
            <person name="Itaya M."/>
            <person name="Jones L.-M."/>
            <person name="Joris B."/>
            <person name="Karamata D."/>
            <person name="Kasahara Y."/>
            <person name="Klaerr-Blanchard M."/>
            <person name="Klein C."/>
            <person name="Kobayashi Y."/>
            <person name="Koetter P."/>
            <person name="Koningstein G."/>
            <person name="Krogh S."/>
            <person name="Kumano M."/>
            <person name="Kurita K."/>
            <person name="Lapidus A."/>
            <person name="Lardinois S."/>
            <person name="Lauber J."/>
            <person name="Lazarevic V."/>
            <person name="Lee S.-M."/>
            <person name="Levine A."/>
            <person name="Liu H."/>
            <person name="Masuda S."/>
            <person name="Mauel C."/>
            <person name="Medigue C."/>
            <person name="Medina N."/>
            <person name="Mellado R.P."/>
            <person name="Mizuno M."/>
            <person name="Moestl D."/>
            <person name="Nakai S."/>
            <person name="Noback M."/>
            <person name="Noone D."/>
            <person name="O'Reilly M."/>
            <person name="Ogawa K."/>
            <person name="Ogiwara A."/>
            <person name="Oudega B."/>
            <person name="Park S.-H."/>
            <person name="Parro V."/>
            <person name="Pohl T.M."/>
            <person name="Portetelle D."/>
            <person name="Porwollik S."/>
            <person name="Prescott A.M."/>
            <person name="Presecan E."/>
            <person name="Pujic P."/>
            <person name="Purnelle B."/>
            <person name="Rapoport G."/>
            <person name="Rey M."/>
            <person name="Reynolds S."/>
            <person name="Rieger M."/>
            <person name="Rivolta C."/>
            <person name="Rocha E."/>
            <person name="Roche B."/>
            <person name="Rose M."/>
            <person name="Sadaie Y."/>
            <person name="Sato T."/>
            <person name="Scanlan E."/>
            <person name="Schleich S."/>
            <person name="Schroeter R."/>
            <person name="Scoffone F."/>
            <person name="Sekiguchi J."/>
            <person name="Sekowska A."/>
            <person name="Seror S.J."/>
            <person name="Serror P."/>
            <person name="Shin B.-S."/>
            <person name="Soldo B."/>
            <person name="Sorokin A."/>
            <person name="Tacconi E."/>
            <person name="Takagi T."/>
            <person name="Takahashi H."/>
            <person name="Takemaru K."/>
            <person name="Takeuchi M."/>
            <person name="Tamakoshi A."/>
            <person name="Tanaka T."/>
            <person name="Terpstra P."/>
            <person name="Tognoni A."/>
            <person name="Tosato V."/>
            <person name="Uchiyama S."/>
            <person name="Vandenbol M."/>
            <person name="Vannier F."/>
            <person name="Vassarotti A."/>
            <person name="Viari A."/>
            <person name="Wambutt R."/>
            <person name="Wedler E."/>
            <person name="Wedler H."/>
            <person name="Weitzenegger T."/>
            <person name="Winters P."/>
            <person name="Wipat A."/>
            <person name="Yamamoto H."/>
            <person name="Yamane K."/>
            <person name="Yasumoto K."/>
            <person name="Yata K."/>
            <person name="Yoshida K."/>
            <person name="Yoshikawa H.-F."/>
            <person name="Zumstein E."/>
            <person name="Yoshikawa H."/>
            <person name="Danchin A."/>
        </authorList>
    </citation>
    <scope>NUCLEOTIDE SEQUENCE [LARGE SCALE GENOMIC DNA]</scope>
    <source>
        <strain>168</strain>
    </source>
</reference>
<reference key="3">
    <citation type="journal article" date="1994" name="J. Bacteriol.">
        <title>Characterization of a cell division gene from Bacillus subtilis that is required for vegetative and sporulation septum formation.</title>
        <authorList>
            <person name="Levin P.A."/>
            <person name="Losick R."/>
        </authorList>
    </citation>
    <scope>NUCLEOTIDE SEQUENCE [GENOMIC DNA] OF 67-211</scope>
    <source>
        <strain>168</strain>
    </source>
</reference>
<reference key="4">
    <citation type="journal article" date="2000" name="Proc. Natl. Acad. Sci. U.S.A.">
        <title>The transcriptional profile of early to middle sporulation in Bacillus subtilis.</title>
        <authorList>
            <person name="Fawcett P."/>
            <person name="Eichenberger P."/>
            <person name="Losick R."/>
            <person name="Youngman P."/>
        </authorList>
    </citation>
    <scope>FUNCTION</scope>
    <scope>INDUCTION</scope>
</reference>
<reference key="5">
    <citation type="journal article" date="2001" name="Microbiology">
        <title>The Bacillus subtilis yabQ gene is essential for formation of the spore cortex.</title>
        <authorList>
            <person name="Asai K."/>
            <person name="Takamatsu H."/>
            <person name="Iwano M."/>
            <person name="Kodama T."/>
            <person name="Watabe K."/>
            <person name="Ogasawara N."/>
        </authorList>
    </citation>
    <scope>FUNCTION</scope>
    <scope>SUBCELLULAR LOCATION</scope>
    <scope>DEVELOPMENTAL STAGE</scope>
    <scope>INDUCTION</scope>
</reference>
<reference key="6">
    <citation type="journal article" date="2004" name="J. Bacteriol.">
        <title>Dynamic patterns of subcellular protein localization during spore coat morphogenesis in Bacillus subtilis.</title>
        <authorList>
            <person name="van Ooij C."/>
            <person name="Eichenberger P."/>
            <person name="Losick R."/>
        </authorList>
    </citation>
    <scope>SUBCELLULAR LOCATION</scope>
    <source>
        <strain>168 / PY79</strain>
    </source>
</reference>
<name>YABQ_BACSU</name>
<feature type="chain" id="PRO_0000049445" description="Spore protein YabQ">
    <location>
        <begin position="1"/>
        <end position="211"/>
    </location>
</feature>
<feature type="transmembrane region" description="Helical" evidence="1">
    <location>
        <begin position="7"/>
        <end position="27"/>
    </location>
</feature>
<feature type="transmembrane region" description="Helical" evidence="1">
    <location>
        <begin position="40"/>
        <end position="60"/>
    </location>
</feature>
<feature type="transmembrane region" description="Helical" evidence="1">
    <location>
        <begin position="66"/>
        <end position="86"/>
    </location>
</feature>
<feature type="transmembrane region" description="Helical" evidence="1">
    <location>
        <begin position="90"/>
        <end position="110"/>
    </location>
</feature>
<feature type="transmembrane region" description="Helical" evidence="1">
    <location>
        <begin position="116"/>
        <end position="136"/>
    </location>
</feature>
<feature type="transmembrane region" description="Helical" evidence="1">
    <location>
        <begin position="141"/>
        <end position="161"/>
    </location>
</feature>
<comment type="function">
    <text evidence="2 3">Required for sporulation. Plays an important role in cortex and coat formation.</text>
</comment>
<comment type="subcellular location">
    <subcellularLocation>
        <location evidence="3 4">Forespore outer membrane</location>
        <topology evidence="3 4">Multi-pass membrane protein</topology>
    </subcellularLocation>
</comment>
<comment type="developmental stage">
    <text evidence="3">Expressed in the mother cell compartment at the second hour of sporulation.</text>
</comment>
<comment type="induction">
    <text evidence="2 3">Expression is sigma E-dependent and negatively regulated by spo0A.</text>
</comment>
<organism>
    <name type="scientific">Bacillus subtilis (strain 168)</name>
    <dbReference type="NCBI Taxonomy" id="224308"/>
    <lineage>
        <taxon>Bacteria</taxon>
        <taxon>Bacillati</taxon>
        <taxon>Bacillota</taxon>
        <taxon>Bacilli</taxon>
        <taxon>Bacillales</taxon>
        <taxon>Bacillaceae</taxon>
        <taxon>Bacillus</taxon>
    </lineage>
</organism>
<dbReference type="EMBL" id="D26185">
    <property type="protein sequence ID" value="BAA05296.1"/>
    <property type="molecule type" value="Genomic_DNA"/>
</dbReference>
<dbReference type="EMBL" id="AL009126">
    <property type="protein sequence ID" value="CAB11837.1"/>
    <property type="molecule type" value="Genomic_DNA"/>
</dbReference>
<dbReference type="EMBL" id="L23497">
    <property type="protein sequence ID" value="AAB38378.1"/>
    <property type="molecule type" value="Genomic_DNA"/>
</dbReference>
<dbReference type="PIR" id="S66091">
    <property type="entry name" value="S66091"/>
</dbReference>
<dbReference type="RefSeq" id="WP_003243260.1">
    <property type="nucleotide sequence ID" value="NZ_OZ025638.1"/>
</dbReference>
<dbReference type="SMR" id="P37559"/>
<dbReference type="FunCoup" id="P37559">
    <property type="interactions" value="90"/>
</dbReference>
<dbReference type="STRING" id="224308.BSU00610"/>
<dbReference type="PaxDb" id="224308-BSU00610"/>
<dbReference type="DNASU" id="936971"/>
<dbReference type="EnsemblBacteria" id="CAB11837">
    <property type="protein sequence ID" value="CAB11837"/>
    <property type="gene ID" value="BSU_00610"/>
</dbReference>
<dbReference type="GeneID" id="936971"/>
<dbReference type="KEGG" id="bsu:BSU00610"/>
<dbReference type="PATRIC" id="fig|224308.179.peg.61"/>
<dbReference type="eggNOG" id="ENOG5032RAH">
    <property type="taxonomic scope" value="Bacteria"/>
</dbReference>
<dbReference type="InParanoid" id="P37559"/>
<dbReference type="OrthoDB" id="1653819at2"/>
<dbReference type="BioCyc" id="BSUB:BSU00610-MONOMER"/>
<dbReference type="Proteomes" id="UP000001570">
    <property type="component" value="Chromosome"/>
</dbReference>
<dbReference type="GO" id="GO:0042601">
    <property type="term" value="C:endospore-forming forespore"/>
    <property type="evidence" value="ECO:0000314"/>
    <property type="project" value="CACAO"/>
</dbReference>
<dbReference type="GO" id="GO:0016020">
    <property type="term" value="C:membrane"/>
    <property type="evidence" value="ECO:0007669"/>
    <property type="project" value="UniProtKB-KW"/>
</dbReference>
<dbReference type="GO" id="GO:0030435">
    <property type="term" value="P:sporulation resulting in formation of a cellular spore"/>
    <property type="evidence" value="ECO:0007669"/>
    <property type="project" value="UniProtKB-KW"/>
</dbReference>
<dbReference type="InterPro" id="IPR019074">
    <property type="entry name" value="YabQ"/>
</dbReference>
<dbReference type="NCBIfam" id="TIGR02893">
    <property type="entry name" value="spore_yabQ"/>
    <property type="match status" value="1"/>
</dbReference>
<dbReference type="Pfam" id="PF09578">
    <property type="entry name" value="Spore_YabQ"/>
    <property type="match status" value="1"/>
</dbReference>
<proteinExistence type="evidence at transcript level"/>
<sequence length="211" mass="25092">MTLTTQFYTMLAMSGMGLWLGASLDTYRLFVIRAKTARWLLFIHDILFWIMQGLLFFYVLLHVNEGEFRIYIFLAVLLGVATYQSLCKRIYIKILKFVIYLVVSVYQFFKKLIQHVLFRPIVWTCGAIIWLAAFLFKKTYSLIGFLLLCLYKIVMVLCFPIRFIAKQCLKLLPVKMRLTFRRYFEKGAGFLKKKKKLLITIRTTITRFLKR</sequence>